<comment type="function">
    <text evidence="1 2">Catalytic component of the signal peptidase complex (SPC) which catalyzes the cleavage of N-terminal signal sequences from nascent proteins as they are translocated into the lumen of the endoplasmic reticulum (By similarity). Specifically cleaves N-terminal signal peptides that contain a hydrophobic alpha-helix (h-region) shorter than 18-20 amino acids (By similarity).</text>
</comment>
<comment type="catalytic activity">
    <reaction evidence="1">
        <text>Cleavage of hydrophobic, N-terminal signal or leader sequences from secreted and periplasmic proteins.</text>
        <dbReference type="EC" id="3.4.21.89"/>
    </reaction>
</comment>
<comment type="subunit">
    <text evidence="1 2">Component of the signal peptidase complex (SPC) composed of a catalytic subunit SEC11 and three accessory subunits SPC1, SPC2 and SPC3 (By similarity). The complex induces a local thinning of the ER membrane which is used to measure the length of the signal peptide (SP) h-region of protein substrates. This ensures the selectivity of the complex towards h-regions shorter than 18-20 amino acids (By similarity). SPC associates with the translocon complex (By similarity).</text>
</comment>
<comment type="subcellular location">
    <subcellularLocation>
        <location evidence="1">Endoplasmic reticulum membrane</location>
        <topology evidence="1">Single-pass type II membrane protein</topology>
    </subcellularLocation>
</comment>
<comment type="domain">
    <text evidence="2">The C-terminal short (CTS) helix is essential for catalytic activity. It may be accommodated as a transmembrane helix in the thinned membrane environment of the complex, similarly to the signal peptide in the complex substrates.</text>
</comment>
<comment type="similarity">
    <text evidence="4">Belongs to the peptidase S26B family.</text>
</comment>
<dbReference type="EC" id="3.4.21.89" evidence="1"/>
<dbReference type="EMBL" id="DS995899">
    <property type="protein sequence ID" value="EEA27435.1"/>
    <property type="molecule type" value="Genomic_DNA"/>
</dbReference>
<dbReference type="RefSeq" id="XP_002143950.1">
    <property type="nucleotide sequence ID" value="XM_002143914.1"/>
</dbReference>
<dbReference type="SMR" id="B6Q5G0"/>
<dbReference type="STRING" id="441960.B6Q5G0"/>
<dbReference type="MEROPS" id="S26.010"/>
<dbReference type="GlyCosmos" id="B6Q5G0">
    <property type="glycosylation" value="1 site, No reported glycans"/>
</dbReference>
<dbReference type="VEuPathDB" id="FungiDB:PMAA_023110"/>
<dbReference type="HOGENOM" id="CLU_089996_0_0_1"/>
<dbReference type="OrthoDB" id="5887at28568"/>
<dbReference type="PhylomeDB" id="B6Q5G0"/>
<dbReference type="Proteomes" id="UP000001294">
    <property type="component" value="Unassembled WGS sequence"/>
</dbReference>
<dbReference type="GO" id="GO:0005787">
    <property type="term" value="C:signal peptidase complex"/>
    <property type="evidence" value="ECO:0007669"/>
    <property type="project" value="TreeGrafter"/>
</dbReference>
<dbReference type="GO" id="GO:0004252">
    <property type="term" value="F:serine-type endopeptidase activity"/>
    <property type="evidence" value="ECO:0007669"/>
    <property type="project" value="UniProtKB-EC"/>
</dbReference>
<dbReference type="GO" id="GO:0006465">
    <property type="term" value="P:signal peptide processing"/>
    <property type="evidence" value="ECO:0007669"/>
    <property type="project" value="InterPro"/>
</dbReference>
<dbReference type="CDD" id="cd06530">
    <property type="entry name" value="S26_SPase_I"/>
    <property type="match status" value="1"/>
</dbReference>
<dbReference type="InterPro" id="IPR036286">
    <property type="entry name" value="LexA/Signal_pep-like_sf"/>
</dbReference>
<dbReference type="InterPro" id="IPR019756">
    <property type="entry name" value="Pept_S26A_signal_pept_1_Ser-AS"/>
</dbReference>
<dbReference type="InterPro" id="IPR015927">
    <property type="entry name" value="Peptidase_S24_S26A/B/C"/>
</dbReference>
<dbReference type="InterPro" id="IPR019533">
    <property type="entry name" value="Peptidase_S26"/>
</dbReference>
<dbReference type="InterPro" id="IPR001733">
    <property type="entry name" value="Peptidase_S26B"/>
</dbReference>
<dbReference type="NCBIfam" id="TIGR02228">
    <property type="entry name" value="sigpep_I_arch"/>
    <property type="match status" value="1"/>
</dbReference>
<dbReference type="PANTHER" id="PTHR10806">
    <property type="entry name" value="SIGNAL PEPTIDASE COMPLEX CATALYTIC SUBUNIT SEC11"/>
    <property type="match status" value="1"/>
</dbReference>
<dbReference type="PANTHER" id="PTHR10806:SF6">
    <property type="entry name" value="SIGNAL PEPTIDASE COMPLEX CATALYTIC SUBUNIT SEC11"/>
    <property type="match status" value="1"/>
</dbReference>
<dbReference type="Pfam" id="PF00717">
    <property type="entry name" value="Peptidase_S24"/>
    <property type="match status" value="1"/>
</dbReference>
<dbReference type="PRINTS" id="PR00728">
    <property type="entry name" value="SIGNALPTASE"/>
</dbReference>
<dbReference type="SUPFAM" id="SSF51306">
    <property type="entry name" value="LexA/Signal peptidase"/>
    <property type="match status" value="1"/>
</dbReference>
<dbReference type="PROSITE" id="PS00501">
    <property type="entry name" value="SPASE_I_1"/>
    <property type="match status" value="1"/>
</dbReference>
<protein>
    <recommendedName>
        <fullName>Signal peptidase complex catalytic subunit sec11</fullName>
        <ecNumber evidence="1">3.4.21.89</ecNumber>
    </recommendedName>
    <alternativeName>
        <fullName>Signal peptidase I</fullName>
    </alternativeName>
</protein>
<feature type="chain" id="PRO_0000412348" description="Signal peptidase complex catalytic subunit sec11">
    <location>
        <begin position="1"/>
        <end position="191"/>
    </location>
</feature>
<feature type="topological domain" description="Cytoplasmic" evidence="3">
    <location>
        <begin position="1"/>
        <end position="18"/>
    </location>
</feature>
<feature type="transmembrane region" description="Helical; Signal-anchor for type II membrane protein" evidence="3">
    <location>
        <begin position="19"/>
        <end position="39"/>
    </location>
</feature>
<feature type="topological domain" description="Lumenal" evidence="3">
    <location>
        <begin position="40"/>
        <end position="191"/>
    </location>
</feature>
<feature type="region of interest" description="C-terminal short (CTS) helix" evidence="2">
    <location>
        <begin position="177"/>
        <end position="188"/>
    </location>
</feature>
<feature type="active site" description="Charge relay system" evidence="1">
    <location>
        <position position="53"/>
    </location>
</feature>
<feature type="active site" description="Charge relay system" evidence="1">
    <location>
        <position position="92"/>
    </location>
</feature>
<feature type="active site" description="Charge relay system" evidence="1">
    <location>
        <position position="133"/>
    </location>
</feature>
<feature type="glycosylation site" description="N-linked (GlcNAc...) asparagine" evidence="3">
    <location>
        <position position="41"/>
    </location>
</feature>
<keyword id="KW-0256">Endoplasmic reticulum</keyword>
<keyword id="KW-0325">Glycoprotein</keyword>
<keyword id="KW-0378">Hydrolase</keyword>
<keyword id="KW-0472">Membrane</keyword>
<keyword id="KW-0645">Protease</keyword>
<keyword id="KW-1185">Reference proteome</keyword>
<keyword id="KW-0735">Signal-anchor</keyword>
<keyword id="KW-0812">Transmembrane</keyword>
<keyword id="KW-1133">Transmembrane helix</keyword>
<reference key="1">
    <citation type="journal article" date="2015" name="Genome Announc.">
        <title>Genome sequence of the AIDS-associated pathogen Penicillium marneffei (ATCC18224) and its near taxonomic relative Talaromyces stipitatus (ATCC10500).</title>
        <authorList>
            <person name="Nierman W.C."/>
            <person name="Fedorova-Abrams N.D."/>
            <person name="Andrianopoulos A."/>
        </authorList>
    </citation>
    <scope>NUCLEOTIDE SEQUENCE [LARGE SCALE GENOMIC DNA]</scope>
    <source>
        <strain>ATCC 18224 / CBS 334.59 / QM 7333</strain>
    </source>
</reference>
<gene>
    <name type="primary">sec11</name>
    <name type="ORF">PMAA_023110</name>
</gene>
<accession>B6Q5G0</accession>
<evidence type="ECO:0000250" key="1">
    <source>
        <dbReference type="UniProtKB" id="P15367"/>
    </source>
</evidence>
<evidence type="ECO:0000250" key="2">
    <source>
        <dbReference type="UniProtKB" id="P67812"/>
    </source>
</evidence>
<evidence type="ECO:0000255" key="3"/>
<evidence type="ECO:0000305" key="4"/>
<organism>
    <name type="scientific">Talaromyces marneffei (strain ATCC 18224 / CBS 334.59 / QM 7333)</name>
    <name type="common">Penicillium marneffei</name>
    <dbReference type="NCBI Taxonomy" id="441960"/>
    <lineage>
        <taxon>Eukaryota</taxon>
        <taxon>Fungi</taxon>
        <taxon>Dikarya</taxon>
        <taxon>Ascomycota</taxon>
        <taxon>Pezizomycotina</taxon>
        <taxon>Eurotiomycetes</taxon>
        <taxon>Eurotiomycetidae</taxon>
        <taxon>Eurotiales</taxon>
        <taxon>Trichocomaceae</taxon>
        <taxon>Talaromyces</taxon>
        <taxon>Talaromyces sect. Talaromyces</taxon>
    </lineage>
</organism>
<name>SEC11_TALMQ</name>
<proteinExistence type="inferred from homology"/>
<sequence>MLSALGGNLSNARQSIAQVLNFALVLSTAFMLWKGVSIASNSSSPIVVVLSGSMEPAFQRGDLLFLWNRAERTEVGEIVVYNVRGRDIPIVHRVVRSYTEEDKKLKAKNKKAGLPTVAPQKLLTKGDNNLADDTELYARGQDFLDRKEDIIGSVRGYIPGVGYVTIMLSEHPWLKTVLLGVMGLMVILQRE</sequence>